<proteinExistence type="inferred from homology"/>
<accession>A8F7P9</accession>
<organism>
    <name type="scientific">Pseudothermotoga lettingae (strain ATCC BAA-301 / DSM 14385 / NBRC 107922 / TMO)</name>
    <name type="common">Thermotoga lettingae</name>
    <dbReference type="NCBI Taxonomy" id="416591"/>
    <lineage>
        <taxon>Bacteria</taxon>
        <taxon>Thermotogati</taxon>
        <taxon>Thermotogota</taxon>
        <taxon>Thermotogae</taxon>
        <taxon>Thermotogales</taxon>
        <taxon>Thermotogaceae</taxon>
        <taxon>Pseudothermotoga</taxon>
    </lineage>
</organism>
<gene>
    <name type="ordered locus">Tlet_1629</name>
</gene>
<name>Y1629_PSELT</name>
<protein>
    <recommendedName>
        <fullName evidence="1">Putative regulatory protein Tlet_1629</fullName>
    </recommendedName>
</protein>
<sequence>MYGLINIGFGNVISGDRVIAIVNPESAPLKRLKDEAKDEGKLIDATYGRKTRAILITDSNHIILSAIQPETIAQRFKQSMIEIEENLNKVR</sequence>
<feature type="chain" id="PRO_1000068581" description="Putative regulatory protein Tlet_1629">
    <location>
        <begin position="1"/>
        <end position="91"/>
    </location>
</feature>
<reference key="1">
    <citation type="submission" date="2007-08" db="EMBL/GenBank/DDBJ databases">
        <title>Complete sequence of Thermotoga lettingae TMO.</title>
        <authorList>
            <consortium name="US DOE Joint Genome Institute"/>
            <person name="Copeland A."/>
            <person name="Lucas S."/>
            <person name="Lapidus A."/>
            <person name="Barry K."/>
            <person name="Glavina del Rio T."/>
            <person name="Dalin E."/>
            <person name="Tice H."/>
            <person name="Pitluck S."/>
            <person name="Foster B."/>
            <person name="Bruce D."/>
            <person name="Schmutz J."/>
            <person name="Larimer F."/>
            <person name="Land M."/>
            <person name="Hauser L."/>
            <person name="Kyrpides N."/>
            <person name="Mikhailova N."/>
            <person name="Nelson K."/>
            <person name="Gogarten J.P."/>
            <person name="Noll K."/>
            <person name="Richardson P."/>
        </authorList>
    </citation>
    <scope>NUCLEOTIDE SEQUENCE [LARGE SCALE GENOMIC DNA]</scope>
    <source>
        <strain>ATCC BAA-301 / DSM 14385 / NBRC 107922 / TMO</strain>
    </source>
</reference>
<keyword id="KW-1185">Reference proteome</keyword>
<evidence type="ECO:0000255" key="1">
    <source>
        <dbReference type="HAMAP-Rule" id="MF_01503"/>
    </source>
</evidence>
<comment type="similarity">
    <text evidence="1">Belongs to the RemA family.</text>
</comment>
<dbReference type="EMBL" id="CP000812">
    <property type="protein sequence ID" value="ABV34183.1"/>
    <property type="molecule type" value="Genomic_DNA"/>
</dbReference>
<dbReference type="RefSeq" id="WP_012003659.1">
    <property type="nucleotide sequence ID" value="NZ_BSDV01000001.1"/>
</dbReference>
<dbReference type="SMR" id="A8F7P9"/>
<dbReference type="STRING" id="416591.Tlet_1629"/>
<dbReference type="KEGG" id="tle:Tlet_1629"/>
<dbReference type="eggNOG" id="COG2052">
    <property type="taxonomic scope" value="Bacteria"/>
</dbReference>
<dbReference type="HOGENOM" id="CLU_165326_0_0_0"/>
<dbReference type="OrthoDB" id="5432174at2"/>
<dbReference type="Proteomes" id="UP000002016">
    <property type="component" value="Chromosome"/>
</dbReference>
<dbReference type="HAMAP" id="MF_01503">
    <property type="entry name" value="RemA"/>
    <property type="match status" value="1"/>
</dbReference>
<dbReference type="InterPro" id="IPR007169">
    <property type="entry name" value="RemA-like"/>
</dbReference>
<dbReference type="NCBIfam" id="NF003315">
    <property type="entry name" value="PRK04323.1"/>
    <property type="match status" value="1"/>
</dbReference>
<dbReference type="PANTHER" id="PTHR38449:SF1">
    <property type="entry name" value="REGULATORY PROTEIN SSL2874-RELATED"/>
    <property type="match status" value="1"/>
</dbReference>
<dbReference type="PANTHER" id="PTHR38449">
    <property type="entry name" value="REGULATORY PROTEIN TM_1690-RELATED"/>
    <property type="match status" value="1"/>
</dbReference>
<dbReference type="Pfam" id="PF04025">
    <property type="entry name" value="RemA-like"/>
    <property type="match status" value="1"/>
</dbReference>